<keyword id="KW-0030">Aminoacyl-tRNA synthetase</keyword>
<keyword id="KW-0067">ATP-binding</keyword>
<keyword id="KW-0963">Cytoplasm</keyword>
<keyword id="KW-0436">Ligase</keyword>
<keyword id="KW-0547">Nucleotide-binding</keyword>
<keyword id="KW-0648">Protein biosynthesis</keyword>
<keyword id="KW-1185">Reference proteome</keyword>
<proteinExistence type="inferred from homology"/>
<name>SYH_DEIDV</name>
<dbReference type="EC" id="6.1.1.21" evidence="1"/>
<dbReference type="EMBL" id="CP001114">
    <property type="protein sequence ID" value="ACO46052.1"/>
    <property type="molecule type" value="Genomic_DNA"/>
</dbReference>
<dbReference type="RefSeq" id="WP_012693175.1">
    <property type="nucleotide sequence ID" value="NC_012526.1"/>
</dbReference>
<dbReference type="SMR" id="C1CV35"/>
<dbReference type="STRING" id="546414.Deide_11470"/>
<dbReference type="PaxDb" id="546414-Deide_11470"/>
<dbReference type="KEGG" id="ddr:Deide_11470"/>
<dbReference type="eggNOG" id="COG0124">
    <property type="taxonomic scope" value="Bacteria"/>
</dbReference>
<dbReference type="HOGENOM" id="CLU_025113_1_1_0"/>
<dbReference type="OrthoDB" id="9800814at2"/>
<dbReference type="Proteomes" id="UP000002208">
    <property type="component" value="Chromosome"/>
</dbReference>
<dbReference type="GO" id="GO:0005737">
    <property type="term" value="C:cytoplasm"/>
    <property type="evidence" value="ECO:0007669"/>
    <property type="project" value="UniProtKB-SubCell"/>
</dbReference>
<dbReference type="GO" id="GO:0005524">
    <property type="term" value="F:ATP binding"/>
    <property type="evidence" value="ECO:0007669"/>
    <property type="project" value="UniProtKB-UniRule"/>
</dbReference>
<dbReference type="GO" id="GO:0004821">
    <property type="term" value="F:histidine-tRNA ligase activity"/>
    <property type="evidence" value="ECO:0007669"/>
    <property type="project" value="UniProtKB-UniRule"/>
</dbReference>
<dbReference type="GO" id="GO:0006427">
    <property type="term" value="P:histidyl-tRNA aminoacylation"/>
    <property type="evidence" value="ECO:0007669"/>
    <property type="project" value="UniProtKB-UniRule"/>
</dbReference>
<dbReference type="CDD" id="cd00773">
    <property type="entry name" value="HisRS-like_core"/>
    <property type="match status" value="1"/>
</dbReference>
<dbReference type="Gene3D" id="3.40.50.800">
    <property type="entry name" value="Anticodon-binding domain"/>
    <property type="match status" value="1"/>
</dbReference>
<dbReference type="Gene3D" id="3.30.930.10">
    <property type="entry name" value="Bira Bifunctional Protein, Domain 2"/>
    <property type="match status" value="1"/>
</dbReference>
<dbReference type="HAMAP" id="MF_00127">
    <property type="entry name" value="His_tRNA_synth"/>
    <property type="match status" value="1"/>
</dbReference>
<dbReference type="InterPro" id="IPR006195">
    <property type="entry name" value="aa-tRNA-synth_II"/>
</dbReference>
<dbReference type="InterPro" id="IPR045864">
    <property type="entry name" value="aa-tRNA-synth_II/BPL/LPL"/>
</dbReference>
<dbReference type="InterPro" id="IPR004154">
    <property type="entry name" value="Anticodon-bd"/>
</dbReference>
<dbReference type="InterPro" id="IPR036621">
    <property type="entry name" value="Anticodon-bd_dom_sf"/>
</dbReference>
<dbReference type="InterPro" id="IPR015807">
    <property type="entry name" value="His-tRNA-ligase"/>
</dbReference>
<dbReference type="InterPro" id="IPR041715">
    <property type="entry name" value="HisRS-like_core"/>
</dbReference>
<dbReference type="InterPro" id="IPR004516">
    <property type="entry name" value="HisRS/HisZ"/>
</dbReference>
<dbReference type="NCBIfam" id="TIGR00442">
    <property type="entry name" value="hisS"/>
    <property type="match status" value="1"/>
</dbReference>
<dbReference type="PANTHER" id="PTHR43707:SF1">
    <property type="entry name" value="HISTIDINE--TRNA LIGASE, MITOCHONDRIAL-RELATED"/>
    <property type="match status" value="1"/>
</dbReference>
<dbReference type="PANTHER" id="PTHR43707">
    <property type="entry name" value="HISTIDYL-TRNA SYNTHETASE"/>
    <property type="match status" value="1"/>
</dbReference>
<dbReference type="Pfam" id="PF03129">
    <property type="entry name" value="HGTP_anticodon"/>
    <property type="match status" value="1"/>
</dbReference>
<dbReference type="Pfam" id="PF13393">
    <property type="entry name" value="tRNA-synt_His"/>
    <property type="match status" value="1"/>
</dbReference>
<dbReference type="PIRSF" id="PIRSF001549">
    <property type="entry name" value="His-tRNA_synth"/>
    <property type="match status" value="1"/>
</dbReference>
<dbReference type="SUPFAM" id="SSF52954">
    <property type="entry name" value="Class II aaRS ABD-related"/>
    <property type="match status" value="1"/>
</dbReference>
<dbReference type="SUPFAM" id="SSF55681">
    <property type="entry name" value="Class II aaRS and biotin synthetases"/>
    <property type="match status" value="1"/>
</dbReference>
<dbReference type="PROSITE" id="PS50862">
    <property type="entry name" value="AA_TRNA_LIGASE_II"/>
    <property type="match status" value="1"/>
</dbReference>
<reference key="1">
    <citation type="journal article" date="2009" name="PLoS Genet.">
        <title>Alliance of proteomics and genomics to unravel the specificities of Sahara bacterium Deinococcus deserti.</title>
        <authorList>
            <person name="de Groot A."/>
            <person name="Dulermo R."/>
            <person name="Ortet P."/>
            <person name="Blanchard L."/>
            <person name="Guerin P."/>
            <person name="Fernandez B."/>
            <person name="Vacherie B."/>
            <person name="Dossat C."/>
            <person name="Jolivet E."/>
            <person name="Siguier P."/>
            <person name="Chandler M."/>
            <person name="Barakat M."/>
            <person name="Dedieu A."/>
            <person name="Barbe V."/>
            <person name="Heulin T."/>
            <person name="Sommer S."/>
            <person name="Achouak W."/>
            <person name="Armengaud J."/>
        </authorList>
    </citation>
    <scope>NUCLEOTIDE SEQUENCE [LARGE SCALE GENOMIC DNA]</scope>
    <source>
        <strain>DSM 17065 / CIP 109153 / LMG 22923 / VCD115</strain>
    </source>
</reference>
<protein>
    <recommendedName>
        <fullName evidence="1">Histidine--tRNA ligase</fullName>
        <ecNumber evidence="1">6.1.1.21</ecNumber>
    </recommendedName>
    <alternativeName>
        <fullName evidence="1">Histidyl-tRNA synthetase</fullName>
        <shortName evidence="1">HisRS</shortName>
    </alternativeName>
</protein>
<evidence type="ECO:0000255" key="1">
    <source>
        <dbReference type="HAMAP-Rule" id="MF_00127"/>
    </source>
</evidence>
<evidence type="ECO:0000256" key="2">
    <source>
        <dbReference type="SAM" id="MobiDB-lite"/>
    </source>
</evidence>
<accession>C1CV35</accession>
<feature type="chain" id="PRO_1000203130" description="Histidine--tRNA ligase">
    <location>
        <begin position="1"/>
        <end position="448"/>
    </location>
</feature>
<feature type="region of interest" description="Disordered" evidence="2">
    <location>
        <begin position="1"/>
        <end position="20"/>
    </location>
</feature>
<feature type="region of interest" description="Disordered" evidence="2">
    <location>
        <begin position="428"/>
        <end position="448"/>
    </location>
</feature>
<comment type="catalytic activity">
    <reaction evidence="1">
        <text>tRNA(His) + L-histidine + ATP = L-histidyl-tRNA(His) + AMP + diphosphate + H(+)</text>
        <dbReference type="Rhea" id="RHEA:17313"/>
        <dbReference type="Rhea" id="RHEA-COMP:9665"/>
        <dbReference type="Rhea" id="RHEA-COMP:9689"/>
        <dbReference type="ChEBI" id="CHEBI:15378"/>
        <dbReference type="ChEBI" id="CHEBI:30616"/>
        <dbReference type="ChEBI" id="CHEBI:33019"/>
        <dbReference type="ChEBI" id="CHEBI:57595"/>
        <dbReference type="ChEBI" id="CHEBI:78442"/>
        <dbReference type="ChEBI" id="CHEBI:78527"/>
        <dbReference type="ChEBI" id="CHEBI:456215"/>
        <dbReference type="EC" id="6.1.1.21"/>
    </reaction>
</comment>
<comment type="subunit">
    <text evidence="1">Homodimer.</text>
</comment>
<comment type="subcellular location">
    <subcellularLocation>
        <location evidence="1">Cytoplasm</location>
    </subcellularLocation>
</comment>
<comment type="similarity">
    <text evidence="1">Belongs to the class-II aminoacyl-tRNA synthetase family.</text>
</comment>
<gene>
    <name evidence="1" type="primary">hisS</name>
    <name type="ordered locus">Deide_11470</name>
</gene>
<organism>
    <name type="scientific">Deinococcus deserti (strain DSM 17065 / CIP 109153 / LMG 22923 / VCD115)</name>
    <dbReference type="NCBI Taxonomy" id="546414"/>
    <lineage>
        <taxon>Bacteria</taxon>
        <taxon>Thermotogati</taxon>
        <taxon>Deinococcota</taxon>
        <taxon>Deinococci</taxon>
        <taxon>Deinococcales</taxon>
        <taxon>Deinococcaceae</taxon>
        <taxon>Deinococcus</taxon>
    </lineage>
</organism>
<sequence>MAIKRPKGTQDHLPDGSPKLSLDTRAAAFTFVRETARRVLERAGAQFTDTPLFEEAELVQRGVGGSTDIVRKEMFTVYYFGDHGGFILRPEGTAGLVRSYLQNGLKQLPAPLKLWTHGPMFRAENVQKGRLRQFHQVDYEVLGSADALVDAEAIALMTEVVRALGVQKVKVKLGSIGDPEDREAYNTYLRELFTPHLEALSDDSKDRLNRNPMRILDSKSESDQTLIAQLGVRPMLDFLGEGARTHFEQVQAYLNAWDVSYEVDPSIVRGLDYYRRTAWELHHEGVGAKSALGGGGRYDGLAQELGSKEVVPGIGWAFGIERLLLAMDAEGVALPETSGPLLYVAAMDDENVTYAATVALTTRRTARAEFAYRAMKPAAAFRDAERRGARFIALIGSDEVAQDTLSIKNLQTGQQSKVQTRDLQAFLAGQADQHSPAIPHDPTPQEKA</sequence>